<sequence length="741" mass="79968">MASTSSLALSQALLARAISHHGSDQRGSLPAFSGLKSTGSRASASSRRRIAQSMTKNRSLRPLVRAAAVETVEPTTDSSIVDKSVNSIRFLAIDAVEKAKSGHPGLPMGCAPMAHILYDEVMRYNPKNPYWFNRDRFVLSAGHGCMLLYALLHLAGYDSVQEEDLKQFRQWGSKTPGHPENFETPGIEVTTGPLGQGIANAVGLALAEKHLAARFNKPDAEVVDHYTYAILGDGCQMEGISNEACSLAGHWGLGKLIAFYDDNHISIDGDTEIAFTENVDQRFEALGWHVIWVKNGNTGYDEIRAAIKEAKTVTDKPTLIKVTTTIGYGSPNKANSYSVHGAALGEKEVEATRNNLGWPYEPFQVPDDVKSHWSRHTPEGATLESDWSAKFAAYEKKYPEEASELKSIITGELPAGWEKALPTYTPESPGDATRNLSQQCLNALAKVVPGFLGGSADLASSNMTLLKAFGDFQKATPEERNLRFGVREHGMGAICNGIALHSPGLIPYCATFFVFTDYMRGAMRISALSEAGVIYVMTHDSIGLGEDGPTHQPIEHIASFRAMPNTLMFRPADGNETAGAYKIAVTKRKTPSILALSRQKLPHLPGTSIEGVEKGGYTISDDSSGNKPDVILIGTGSELEIAAQAAEVLRKDGKTVRVVSFVCWELFDEQSDEYKESVLPSDVSARVSIEAASTFGWGKIVGGKGKSIGINSFGASAPAPLLYKEFGITVEAVVDAAKSFF</sequence>
<dbReference type="EC" id="2.2.1.1"/>
<dbReference type="EMBL" id="AL162295">
    <property type="protein sequence ID" value="CAB82679.1"/>
    <property type="status" value="ALT_SEQ"/>
    <property type="molecule type" value="Genomic_DNA"/>
</dbReference>
<dbReference type="EMBL" id="CP002686">
    <property type="protein sequence ID" value="AEE80103.1"/>
    <property type="molecule type" value="Genomic_DNA"/>
</dbReference>
<dbReference type="EMBL" id="AF424631">
    <property type="protein sequence ID" value="AAL11624.1"/>
    <property type="status" value="ALT_FRAME"/>
    <property type="molecule type" value="mRNA"/>
</dbReference>
<dbReference type="EMBL" id="AY091094">
    <property type="protein sequence ID" value="AAM14045.1"/>
    <property type="molecule type" value="mRNA"/>
</dbReference>
<dbReference type="EMBL" id="AY133860">
    <property type="protein sequence ID" value="AAM91794.1"/>
    <property type="molecule type" value="mRNA"/>
</dbReference>
<dbReference type="EMBL" id="BT000604">
    <property type="protein sequence ID" value="AAN18173.1"/>
    <property type="status" value="ALT_FRAME"/>
    <property type="molecule type" value="mRNA"/>
</dbReference>
<dbReference type="EMBL" id="BT003331">
    <property type="protein sequence ID" value="AAO29950.1"/>
    <property type="molecule type" value="mRNA"/>
</dbReference>
<dbReference type="EMBL" id="AY085542">
    <property type="protein sequence ID" value="AAM62766.1"/>
    <property type="molecule type" value="mRNA"/>
</dbReference>
<dbReference type="EMBL" id="AK317159">
    <property type="protein sequence ID" value="BAH19845.1"/>
    <property type="molecule type" value="mRNA"/>
</dbReference>
<dbReference type="PIR" id="T47886">
    <property type="entry name" value="T47886"/>
</dbReference>
<dbReference type="RefSeq" id="NP_567103.1">
    <molecule id="Q8RWV0-1"/>
    <property type="nucleotide sequence ID" value="NM_115939.3"/>
</dbReference>
<dbReference type="SMR" id="Q8RWV0"/>
<dbReference type="BioGRID" id="10560">
    <property type="interactions" value="8"/>
</dbReference>
<dbReference type="FunCoup" id="Q8RWV0">
    <property type="interactions" value="2260"/>
</dbReference>
<dbReference type="IntAct" id="Q8RWV0">
    <property type="interactions" value="3"/>
</dbReference>
<dbReference type="MINT" id="Q8RWV0"/>
<dbReference type="STRING" id="3702.Q8RWV0"/>
<dbReference type="iPTMnet" id="Q8RWV0"/>
<dbReference type="PaxDb" id="3702-AT3G60750.1"/>
<dbReference type="ProMEX" id="Q8RWV0"/>
<dbReference type="ProteomicsDB" id="234316">
    <molecule id="Q8RWV0-1"/>
</dbReference>
<dbReference type="EnsemblPlants" id="AT3G60750.1">
    <molecule id="Q8RWV0-1"/>
    <property type="protein sequence ID" value="AT3G60750.1"/>
    <property type="gene ID" value="AT3G60750"/>
</dbReference>
<dbReference type="GeneID" id="825246"/>
<dbReference type="Gramene" id="AT3G60750.1">
    <molecule id="Q8RWV0-1"/>
    <property type="protein sequence ID" value="AT3G60750.1"/>
    <property type="gene ID" value="AT3G60750"/>
</dbReference>
<dbReference type="KEGG" id="ath:AT3G60750"/>
<dbReference type="Araport" id="AT3G60750"/>
<dbReference type="TAIR" id="AT3G60750">
    <property type="gene designation" value="TKL1"/>
</dbReference>
<dbReference type="eggNOG" id="KOG0523">
    <property type="taxonomic scope" value="Eukaryota"/>
</dbReference>
<dbReference type="InParanoid" id="Q8RWV0"/>
<dbReference type="OMA" id="VYCLCGD"/>
<dbReference type="OrthoDB" id="10267175at2759"/>
<dbReference type="PhylomeDB" id="Q8RWV0"/>
<dbReference type="BioCyc" id="ARA:AT3G60750-MONOMER"/>
<dbReference type="UniPathway" id="UPA00116"/>
<dbReference type="CD-CODE" id="4299E36E">
    <property type="entry name" value="Nucleolus"/>
</dbReference>
<dbReference type="PRO" id="PR:Q8RWV0"/>
<dbReference type="Proteomes" id="UP000006548">
    <property type="component" value="Chromosome 3"/>
</dbReference>
<dbReference type="ExpressionAtlas" id="Q8RWV0">
    <property type="expression patterns" value="baseline and differential"/>
</dbReference>
<dbReference type="GO" id="GO:0009507">
    <property type="term" value="C:chloroplast"/>
    <property type="evidence" value="ECO:0000314"/>
    <property type="project" value="TAIR"/>
</dbReference>
<dbReference type="GO" id="GO:0009941">
    <property type="term" value="C:chloroplast envelope"/>
    <property type="evidence" value="ECO:0007005"/>
    <property type="project" value="TAIR"/>
</dbReference>
<dbReference type="GO" id="GO:0009570">
    <property type="term" value="C:chloroplast stroma"/>
    <property type="evidence" value="ECO:0000314"/>
    <property type="project" value="TAIR"/>
</dbReference>
<dbReference type="GO" id="GO:0005829">
    <property type="term" value="C:cytosol"/>
    <property type="evidence" value="ECO:0007005"/>
    <property type="project" value="TAIR"/>
</dbReference>
<dbReference type="GO" id="GO:0009536">
    <property type="term" value="C:plastid"/>
    <property type="evidence" value="ECO:0007005"/>
    <property type="project" value="TAIR"/>
</dbReference>
<dbReference type="GO" id="GO:0046872">
    <property type="term" value="F:metal ion binding"/>
    <property type="evidence" value="ECO:0007669"/>
    <property type="project" value="UniProtKB-KW"/>
</dbReference>
<dbReference type="GO" id="GO:0003729">
    <property type="term" value="F:mRNA binding"/>
    <property type="evidence" value="ECO:0000314"/>
    <property type="project" value="TAIR"/>
</dbReference>
<dbReference type="GO" id="GO:0004802">
    <property type="term" value="F:transketolase activity"/>
    <property type="evidence" value="ECO:0007669"/>
    <property type="project" value="UniProtKB-EC"/>
</dbReference>
<dbReference type="GO" id="GO:0019253">
    <property type="term" value="P:reductive pentose-phosphate cycle"/>
    <property type="evidence" value="ECO:0007669"/>
    <property type="project" value="UniProtKB-UniPathway"/>
</dbReference>
<dbReference type="CDD" id="cd07033">
    <property type="entry name" value="TPP_PYR_DXS_TK_like"/>
    <property type="match status" value="1"/>
</dbReference>
<dbReference type="CDD" id="cd02012">
    <property type="entry name" value="TPP_TK"/>
    <property type="match status" value="1"/>
</dbReference>
<dbReference type="FunFam" id="3.40.50.920:FF:000003">
    <property type="entry name" value="Transketolase"/>
    <property type="match status" value="1"/>
</dbReference>
<dbReference type="FunFam" id="3.40.50.970:FF:000003">
    <property type="entry name" value="Transketolase"/>
    <property type="match status" value="1"/>
</dbReference>
<dbReference type="FunFam" id="3.40.50.970:FF:000004">
    <property type="entry name" value="Transketolase"/>
    <property type="match status" value="1"/>
</dbReference>
<dbReference type="Gene3D" id="3.40.50.920">
    <property type="match status" value="1"/>
</dbReference>
<dbReference type="Gene3D" id="3.40.50.970">
    <property type="match status" value="2"/>
</dbReference>
<dbReference type="InterPro" id="IPR029061">
    <property type="entry name" value="THDP-binding"/>
</dbReference>
<dbReference type="InterPro" id="IPR009014">
    <property type="entry name" value="Transketo_C/PFOR_II"/>
</dbReference>
<dbReference type="InterPro" id="IPR055152">
    <property type="entry name" value="Transketolase-like_C_2"/>
</dbReference>
<dbReference type="InterPro" id="IPR005475">
    <property type="entry name" value="Transketolase-like_Pyr-bd"/>
</dbReference>
<dbReference type="InterPro" id="IPR005478">
    <property type="entry name" value="Transketolase_bac-like"/>
</dbReference>
<dbReference type="InterPro" id="IPR020826">
    <property type="entry name" value="Transketolase_BS"/>
</dbReference>
<dbReference type="InterPro" id="IPR049557">
    <property type="entry name" value="Transketolase_CS"/>
</dbReference>
<dbReference type="InterPro" id="IPR033247">
    <property type="entry name" value="Transketolase_fam"/>
</dbReference>
<dbReference type="InterPro" id="IPR005474">
    <property type="entry name" value="Transketolase_N"/>
</dbReference>
<dbReference type="NCBIfam" id="TIGR00232">
    <property type="entry name" value="tktlase_bact"/>
    <property type="match status" value="1"/>
</dbReference>
<dbReference type="PANTHER" id="PTHR43522">
    <property type="entry name" value="TRANSKETOLASE"/>
    <property type="match status" value="1"/>
</dbReference>
<dbReference type="PANTHER" id="PTHR43522:SF14">
    <property type="entry name" value="TRANSKETOLASE-1, CHLOROPLASTIC"/>
    <property type="match status" value="1"/>
</dbReference>
<dbReference type="Pfam" id="PF02779">
    <property type="entry name" value="Transket_pyr"/>
    <property type="match status" value="1"/>
</dbReference>
<dbReference type="Pfam" id="PF22613">
    <property type="entry name" value="Transketolase_C_1"/>
    <property type="match status" value="1"/>
</dbReference>
<dbReference type="Pfam" id="PF00456">
    <property type="entry name" value="Transketolase_N"/>
    <property type="match status" value="1"/>
</dbReference>
<dbReference type="SMART" id="SM00861">
    <property type="entry name" value="Transket_pyr"/>
    <property type="match status" value="1"/>
</dbReference>
<dbReference type="SUPFAM" id="SSF52518">
    <property type="entry name" value="Thiamin diphosphate-binding fold (THDP-binding)"/>
    <property type="match status" value="2"/>
</dbReference>
<dbReference type="SUPFAM" id="SSF52922">
    <property type="entry name" value="TK C-terminal domain-like"/>
    <property type="match status" value="1"/>
</dbReference>
<dbReference type="PROSITE" id="PS00801">
    <property type="entry name" value="TRANSKETOLASE_1"/>
    <property type="match status" value="1"/>
</dbReference>
<dbReference type="PROSITE" id="PS00802">
    <property type="entry name" value="TRANSKETOLASE_2"/>
    <property type="match status" value="1"/>
</dbReference>
<name>TKTC1_ARATH</name>
<gene>
    <name type="primary">TKL-1</name>
    <name type="ordered locus">At3g60750</name>
    <name type="ORF">T4C21_160</name>
</gene>
<evidence type="ECO:0000250" key="1"/>
<evidence type="ECO:0000256" key="2">
    <source>
        <dbReference type="SAM" id="MobiDB-lite"/>
    </source>
</evidence>
<evidence type="ECO:0000269" key="3">
    <source>
    </source>
</evidence>
<evidence type="ECO:0000269" key="4">
    <source>
    </source>
</evidence>
<evidence type="ECO:0000305" key="5"/>
<evidence type="ECO:0007744" key="6">
    <source>
    </source>
</evidence>
<evidence type="ECO:0007744" key="7">
    <source>
    </source>
</evidence>
<protein>
    <recommendedName>
        <fullName>Transketolase-1, chloroplastic</fullName>
        <shortName>TK</shortName>
        <ecNumber>2.2.1.1</ecNumber>
    </recommendedName>
</protein>
<feature type="transit peptide" description="Chloroplast" evidence="7">
    <location>
        <begin position="1"/>
        <end position="66"/>
    </location>
</feature>
<feature type="chain" id="PRO_0000421817" description="Transketolase-1, chloroplastic">
    <location>
        <begin position="67"/>
        <end position="741"/>
    </location>
</feature>
<feature type="region of interest" description="Disordered" evidence="2">
    <location>
        <begin position="22"/>
        <end position="51"/>
    </location>
</feature>
<feature type="active site" description="Proton donor" evidence="1">
    <location>
        <position position="488"/>
    </location>
</feature>
<feature type="binding site" evidence="1">
    <location>
        <position position="103"/>
    </location>
    <ligand>
        <name>substrate</name>
    </ligand>
</feature>
<feature type="binding site" evidence="1">
    <location>
        <position position="143"/>
    </location>
    <ligand>
        <name>thiamine diphosphate</name>
        <dbReference type="ChEBI" id="CHEBI:58937"/>
    </ligand>
</feature>
<feature type="binding site" evidence="1">
    <location>
        <begin position="192"/>
        <end position="194"/>
    </location>
    <ligand>
        <name>thiamine diphosphate</name>
        <dbReference type="ChEBI" id="CHEBI:58937"/>
    </ligand>
</feature>
<feature type="binding site" evidence="1">
    <location>
        <position position="233"/>
    </location>
    <ligand>
        <name>Mg(2+)</name>
        <dbReference type="ChEBI" id="CHEBI:18420"/>
    </ligand>
</feature>
<feature type="binding site" evidence="1">
    <location>
        <position position="234"/>
    </location>
    <ligand>
        <name>thiamine diphosphate</name>
        <dbReference type="ChEBI" id="CHEBI:58937"/>
    </ligand>
</feature>
<feature type="binding site" evidence="1">
    <location>
        <position position="263"/>
    </location>
    <ligand>
        <name>Mg(2+)</name>
        <dbReference type="ChEBI" id="CHEBI:18420"/>
    </ligand>
</feature>
<feature type="binding site" evidence="1">
    <location>
        <position position="263"/>
    </location>
    <ligand>
        <name>thiamine diphosphate</name>
        <dbReference type="ChEBI" id="CHEBI:58937"/>
    </ligand>
</feature>
<feature type="binding site" evidence="1">
    <location>
        <position position="265"/>
    </location>
    <ligand>
        <name>Mg(2+)</name>
        <dbReference type="ChEBI" id="CHEBI:18420"/>
    </ligand>
</feature>
<feature type="binding site" evidence="1">
    <location>
        <position position="340"/>
    </location>
    <ligand>
        <name>substrate</name>
    </ligand>
</feature>
<feature type="binding site" evidence="1">
    <location>
        <position position="340"/>
    </location>
    <ligand>
        <name>thiamine diphosphate</name>
        <dbReference type="ChEBI" id="CHEBI:58937"/>
    </ligand>
</feature>
<feature type="binding site" evidence="1">
    <location>
        <position position="434"/>
    </location>
    <ligand>
        <name>substrate</name>
    </ligand>
</feature>
<feature type="binding site" evidence="1">
    <location>
        <position position="461"/>
    </location>
    <ligand>
        <name>substrate</name>
    </ligand>
</feature>
<feature type="binding site" evidence="1">
    <location>
        <position position="488"/>
    </location>
    <ligand>
        <name>thiamine diphosphate</name>
        <dbReference type="ChEBI" id="CHEBI:58937"/>
    </ligand>
</feature>
<feature type="binding site" evidence="1">
    <location>
        <position position="515"/>
    </location>
    <ligand>
        <name>thiamine diphosphate</name>
        <dbReference type="ChEBI" id="CHEBI:58937"/>
    </ligand>
</feature>
<feature type="binding site" evidence="1">
    <location>
        <position position="539"/>
    </location>
    <ligand>
        <name>substrate</name>
    </ligand>
</feature>
<feature type="binding site" evidence="1">
    <location>
        <position position="547"/>
    </location>
    <ligand>
        <name>substrate</name>
    </ligand>
</feature>
<feature type="binding site" evidence="1">
    <location>
        <position position="598"/>
    </location>
    <ligand>
        <name>substrate</name>
    </ligand>
</feature>
<feature type="site" description="Important for catalytic activity" evidence="1">
    <location>
        <position position="103"/>
    </location>
</feature>
<feature type="site" description="Important for catalytic activity" evidence="1">
    <location>
        <position position="340"/>
    </location>
</feature>
<feature type="modified residue" description="N-acetylalanine" evidence="7">
    <location>
        <position position="67"/>
    </location>
</feature>
<feature type="modified residue" description="Phosphoserine" evidence="6">
    <location>
        <position position="428"/>
    </location>
</feature>
<feature type="sequence conflict" description="In Ref. 4; AAM62766." evidence="5" ref="4">
    <original>R</original>
    <variation>L</variation>
    <location>
        <position position="282"/>
    </location>
</feature>
<feature type="sequence conflict" description="In Ref. 3; AAO29950." evidence="5" ref="3">
    <original>L</original>
    <variation>V</variation>
    <location>
        <position position="482"/>
    </location>
</feature>
<organism>
    <name type="scientific">Arabidopsis thaliana</name>
    <name type="common">Mouse-ear cress</name>
    <dbReference type="NCBI Taxonomy" id="3702"/>
    <lineage>
        <taxon>Eukaryota</taxon>
        <taxon>Viridiplantae</taxon>
        <taxon>Streptophyta</taxon>
        <taxon>Embryophyta</taxon>
        <taxon>Tracheophyta</taxon>
        <taxon>Spermatophyta</taxon>
        <taxon>Magnoliopsida</taxon>
        <taxon>eudicotyledons</taxon>
        <taxon>Gunneridae</taxon>
        <taxon>Pentapetalae</taxon>
        <taxon>rosids</taxon>
        <taxon>malvids</taxon>
        <taxon>Brassicales</taxon>
        <taxon>Brassicaceae</taxon>
        <taxon>Camelineae</taxon>
        <taxon>Arabidopsis</taxon>
    </lineage>
</organism>
<proteinExistence type="evidence at protein level"/>
<keyword id="KW-0007">Acetylation</keyword>
<keyword id="KW-0025">Alternative splicing</keyword>
<keyword id="KW-0106">Calcium</keyword>
<keyword id="KW-0150">Chloroplast</keyword>
<keyword id="KW-0460">Magnesium</keyword>
<keyword id="KW-0479">Metal-binding</keyword>
<keyword id="KW-0597">Phosphoprotein</keyword>
<keyword id="KW-0934">Plastid</keyword>
<keyword id="KW-1185">Reference proteome</keyword>
<keyword id="KW-0786">Thiamine pyrophosphate</keyword>
<keyword id="KW-0808">Transferase</keyword>
<keyword id="KW-0809">Transit peptide</keyword>
<comment type="function">
    <text evidence="1 4">Catalyzes the reversible transfer of a two-carbon ketol group from fructose-6-phosphate or sedoheptulose-7-phosphate to glyceraldehyde-3-phosphate to yield xylulose-5-phosphate and erythrose-4-phosphate or ribose-5-phosphate, respectively (By similarity). Could act as a stress sensor involved in adaptation process.</text>
</comment>
<comment type="catalytic activity">
    <reaction>
        <text>D-sedoheptulose 7-phosphate + D-glyceraldehyde 3-phosphate = aldehydo-D-ribose 5-phosphate + D-xylulose 5-phosphate</text>
        <dbReference type="Rhea" id="RHEA:10508"/>
        <dbReference type="ChEBI" id="CHEBI:57483"/>
        <dbReference type="ChEBI" id="CHEBI:57737"/>
        <dbReference type="ChEBI" id="CHEBI:58273"/>
        <dbReference type="ChEBI" id="CHEBI:59776"/>
        <dbReference type="EC" id="2.2.1.1"/>
    </reaction>
</comment>
<comment type="cofactor">
    <cofactor evidence="1">
        <name>Mg(2+)</name>
        <dbReference type="ChEBI" id="CHEBI:18420"/>
    </cofactor>
    <cofactor evidence="1">
        <name>Ca(2+)</name>
        <dbReference type="ChEBI" id="CHEBI:29108"/>
    </cofactor>
    <cofactor evidence="1">
        <name>Mn(2+)</name>
        <dbReference type="ChEBI" id="CHEBI:29035"/>
    </cofactor>
    <cofactor evidence="1">
        <name>Co(2+)</name>
        <dbReference type="ChEBI" id="CHEBI:48828"/>
    </cofactor>
    <text evidence="1">Binds 1 Mg(2+) ion per subunit. Can also utilize other divalent metal cations, such as Ca(2+), Mn(2+) and Co(2+).</text>
</comment>
<comment type="cofactor">
    <cofactor evidence="1">
        <name>thiamine diphosphate</name>
        <dbReference type="ChEBI" id="CHEBI:58937"/>
    </cofactor>
    <text evidence="1">Binds 1 thiamine pyrophosphate per subunit.</text>
</comment>
<comment type="pathway">
    <text>Carbohydrate biosynthesis; Calvin cycle.</text>
</comment>
<comment type="subunit">
    <text evidence="1">Homodimer.</text>
</comment>
<comment type="subcellular location">
    <subcellularLocation>
        <location evidence="3">Plastid</location>
        <location evidence="3">Chloroplast stroma</location>
    </subcellularLocation>
</comment>
<comment type="alternative products">
    <event type="alternative splicing"/>
    <isoform>
        <id>Q8RWV0-1</id>
        <name>1</name>
        <sequence type="displayed"/>
    </isoform>
    <text>A number of isoforms are produced. According to EST sequences.</text>
</comment>
<comment type="induction">
    <text evidence="4">Up-regulated by salt, sorbitol, and abscisic acid (ABA).</text>
</comment>
<comment type="similarity">
    <text evidence="5">Belongs to the transketolase family.</text>
</comment>
<comment type="sequence caution" evidence="5">
    <conflict type="frameshift">
        <sequence resource="EMBL-CDS" id="AAL11624"/>
    </conflict>
</comment>
<comment type="sequence caution" evidence="5">
    <conflict type="frameshift">
        <sequence resource="EMBL-CDS" id="AAN18173"/>
    </conflict>
</comment>
<comment type="sequence caution" evidence="5">
    <conflict type="erroneous gene model prediction">
        <sequence resource="EMBL-CDS" id="CAB82679"/>
    </conflict>
</comment>
<reference key="1">
    <citation type="journal article" date="2000" name="Nature">
        <title>Sequence and analysis of chromosome 3 of the plant Arabidopsis thaliana.</title>
        <authorList>
            <person name="Salanoubat M."/>
            <person name="Lemcke K."/>
            <person name="Rieger M."/>
            <person name="Ansorge W."/>
            <person name="Unseld M."/>
            <person name="Fartmann B."/>
            <person name="Valle G."/>
            <person name="Bloecker H."/>
            <person name="Perez-Alonso M."/>
            <person name="Obermaier B."/>
            <person name="Delseny M."/>
            <person name="Boutry M."/>
            <person name="Grivell L.A."/>
            <person name="Mache R."/>
            <person name="Puigdomenech P."/>
            <person name="De Simone V."/>
            <person name="Choisne N."/>
            <person name="Artiguenave F."/>
            <person name="Robert C."/>
            <person name="Brottier P."/>
            <person name="Wincker P."/>
            <person name="Cattolico L."/>
            <person name="Weissenbach J."/>
            <person name="Saurin W."/>
            <person name="Quetier F."/>
            <person name="Schaefer M."/>
            <person name="Mueller-Auer S."/>
            <person name="Gabel C."/>
            <person name="Fuchs M."/>
            <person name="Benes V."/>
            <person name="Wurmbach E."/>
            <person name="Drzonek H."/>
            <person name="Erfle H."/>
            <person name="Jordan N."/>
            <person name="Bangert S."/>
            <person name="Wiedelmann R."/>
            <person name="Kranz H."/>
            <person name="Voss H."/>
            <person name="Holland R."/>
            <person name="Brandt P."/>
            <person name="Nyakatura G."/>
            <person name="Vezzi A."/>
            <person name="D'Angelo M."/>
            <person name="Pallavicini A."/>
            <person name="Toppo S."/>
            <person name="Simionati B."/>
            <person name="Conrad A."/>
            <person name="Hornischer K."/>
            <person name="Kauer G."/>
            <person name="Loehnert T.-H."/>
            <person name="Nordsiek G."/>
            <person name="Reichelt J."/>
            <person name="Scharfe M."/>
            <person name="Schoen O."/>
            <person name="Bargues M."/>
            <person name="Terol J."/>
            <person name="Climent J."/>
            <person name="Navarro P."/>
            <person name="Collado C."/>
            <person name="Perez-Perez A."/>
            <person name="Ottenwaelder B."/>
            <person name="Duchemin D."/>
            <person name="Cooke R."/>
            <person name="Laudie M."/>
            <person name="Berger-Llauro C."/>
            <person name="Purnelle B."/>
            <person name="Masuy D."/>
            <person name="de Haan M."/>
            <person name="Maarse A.C."/>
            <person name="Alcaraz J.-P."/>
            <person name="Cottet A."/>
            <person name="Casacuberta E."/>
            <person name="Monfort A."/>
            <person name="Argiriou A."/>
            <person name="Flores M."/>
            <person name="Liguori R."/>
            <person name="Vitale D."/>
            <person name="Mannhaupt G."/>
            <person name="Haase D."/>
            <person name="Schoof H."/>
            <person name="Rudd S."/>
            <person name="Zaccaria P."/>
            <person name="Mewes H.-W."/>
            <person name="Mayer K.F.X."/>
            <person name="Kaul S."/>
            <person name="Town C.D."/>
            <person name="Koo H.L."/>
            <person name="Tallon L.J."/>
            <person name="Jenkins J."/>
            <person name="Rooney T."/>
            <person name="Rizzo M."/>
            <person name="Walts A."/>
            <person name="Utterback T."/>
            <person name="Fujii C.Y."/>
            <person name="Shea T.P."/>
            <person name="Creasy T.H."/>
            <person name="Haas B."/>
            <person name="Maiti R."/>
            <person name="Wu D."/>
            <person name="Peterson J."/>
            <person name="Van Aken S."/>
            <person name="Pai G."/>
            <person name="Militscher J."/>
            <person name="Sellers P."/>
            <person name="Gill J.E."/>
            <person name="Feldblyum T.V."/>
            <person name="Preuss D."/>
            <person name="Lin X."/>
            <person name="Nierman W.C."/>
            <person name="Salzberg S.L."/>
            <person name="White O."/>
            <person name="Venter J.C."/>
            <person name="Fraser C.M."/>
            <person name="Kaneko T."/>
            <person name="Nakamura Y."/>
            <person name="Sato S."/>
            <person name="Kato T."/>
            <person name="Asamizu E."/>
            <person name="Sasamoto S."/>
            <person name="Kimura T."/>
            <person name="Idesawa K."/>
            <person name="Kawashima K."/>
            <person name="Kishida Y."/>
            <person name="Kiyokawa C."/>
            <person name="Kohara M."/>
            <person name="Matsumoto M."/>
            <person name="Matsuno A."/>
            <person name="Muraki A."/>
            <person name="Nakayama S."/>
            <person name="Nakazaki N."/>
            <person name="Shinpo S."/>
            <person name="Takeuchi C."/>
            <person name="Wada T."/>
            <person name="Watanabe A."/>
            <person name="Yamada M."/>
            <person name="Yasuda M."/>
            <person name="Tabata S."/>
        </authorList>
    </citation>
    <scope>NUCLEOTIDE SEQUENCE [LARGE SCALE GENOMIC DNA]</scope>
    <source>
        <strain>cv. Columbia</strain>
    </source>
</reference>
<reference key="2">
    <citation type="journal article" date="2017" name="Plant J.">
        <title>Araport11: a complete reannotation of the Arabidopsis thaliana reference genome.</title>
        <authorList>
            <person name="Cheng C.Y."/>
            <person name="Krishnakumar V."/>
            <person name="Chan A.P."/>
            <person name="Thibaud-Nissen F."/>
            <person name="Schobel S."/>
            <person name="Town C.D."/>
        </authorList>
    </citation>
    <scope>GENOME REANNOTATION</scope>
    <source>
        <strain>cv. Columbia</strain>
    </source>
</reference>
<reference key="3">
    <citation type="journal article" date="2003" name="Science">
        <title>Empirical analysis of transcriptional activity in the Arabidopsis genome.</title>
        <authorList>
            <person name="Yamada K."/>
            <person name="Lim J."/>
            <person name="Dale J.M."/>
            <person name="Chen H."/>
            <person name="Shinn P."/>
            <person name="Palm C.J."/>
            <person name="Southwick A.M."/>
            <person name="Wu H.C."/>
            <person name="Kim C.J."/>
            <person name="Nguyen M."/>
            <person name="Pham P.K."/>
            <person name="Cheuk R.F."/>
            <person name="Karlin-Newmann G."/>
            <person name="Liu S.X."/>
            <person name="Lam B."/>
            <person name="Sakano H."/>
            <person name="Wu T."/>
            <person name="Yu G."/>
            <person name="Miranda M."/>
            <person name="Quach H.L."/>
            <person name="Tripp M."/>
            <person name="Chang C.H."/>
            <person name="Lee J.M."/>
            <person name="Toriumi M.J."/>
            <person name="Chan M.M."/>
            <person name="Tang C.C."/>
            <person name="Onodera C.S."/>
            <person name="Deng J.M."/>
            <person name="Akiyama K."/>
            <person name="Ansari Y."/>
            <person name="Arakawa T."/>
            <person name="Banh J."/>
            <person name="Banno F."/>
            <person name="Bowser L."/>
            <person name="Brooks S.Y."/>
            <person name="Carninci P."/>
            <person name="Chao Q."/>
            <person name="Choy N."/>
            <person name="Enju A."/>
            <person name="Goldsmith A.D."/>
            <person name="Gurjal M."/>
            <person name="Hansen N.F."/>
            <person name="Hayashizaki Y."/>
            <person name="Johnson-Hopson C."/>
            <person name="Hsuan V.W."/>
            <person name="Iida K."/>
            <person name="Karnes M."/>
            <person name="Khan S."/>
            <person name="Koesema E."/>
            <person name="Ishida J."/>
            <person name="Jiang P.X."/>
            <person name="Jones T."/>
            <person name="Kawai J."/>
            <person name="Kamiya A."/>
            <person name="Meyers C."/>
            <person name="Nakajima M."/>
            <person name="Narusaka M."/>
            <person name="Seki M."/>
            <person name="Sakurai T."/>
            <person name="Satou M."/>
            <person name="Tamse R."/>
            <person name="Vaysberg M."/>
            <person name="Wallender E.K."/>
            <person name="Wong C."/>
            <person name="Yamamura Y."/>
            <person name="Yuan S."/>
            <person name="Shinozaki K."/>
            <person name="Davis R.W."/>
            <person name="Theologis A."/>
            <person name="Ecker J.R."/>
        </authorList>
    </citation>
    <scope>NUCLEOTIDE SEQUENCE [LARGE SCALE MRNA]</scope>
    <source>
        <strain>cv. Columbia</strain>
    </source>
</reference>
<reference key="4">
    <citation type="submission" date="2002-03" db="EMBL/GenBank/DDBJ databases">
        <title>Full-length cDNA from Arabidopsis thaliana.</title>
        <authorList>
            <person name="Brover V.V."/>
            <person name="Troukhan M.E."/>
            <person name="Alexandrov N.A."/>
            <person name="Lu Y.-P."/>
            <person name="Flavell R.B."/>
            <person name="Feldmann K.A."/>
        </authorList>
    </citation>
    <scope>NUCLEOTIDE SEQUENCE [LARGE SCALE MRNA]</scope>
</reference>
<reference key="5">
    <citation type="journal article" date="2009" name="DNA Res.">
        <title>Analysis of multiple occurrences of alternative splicing events in Arabidopsis thaliana using novel sequenced full-length cDNAs.</title>
        <authorList>
            <person name="Iida K."/>
            <person name="Fukami-Kobayashi K."/>
            <person name="Toyoda A."/>
            <person name="Sakaki Y."/>
            <person name="Kobayashi M."/>
            <person name="Seki M."/>
            <person name="Shinozaki K."/>
        </authorList>
    </citation>
    <scope>NUCLEOTIDE SEQUENCE [LARGE SCALE MRNA] OF 172-741</scope>
    <source>
        <strain>cv. Columbia</strain>
        <tissue>Rosette leaf</tissue>
    </source>
</reference>
<reference key="6">
    <citation type="journal article" date="2008" name="PLoS ONE">
        <title>Sorting signals, N-terminal modifications and abundance of the chloroplast proteome.</title>
        <authorList>
            <person name="Zybailov B."/>
            <person name="Rutschow H."/>
            <person name="Friso G."/>
            <person name="Rudella A."/>
            <person name="Emanuelsson O."/>
            <person name="Sun Q."/>
            <person name="van Wijk K.J."/>
        </authorList>
    </citation>
    <scope>IDENTIFICATION BY MASS SPECTROMETRY</scope>
    <scope>SUBCELLULAR LOCATION [LARGE SCALE ANALYSIS]</scope>
</reference>
<reference key="7">
    <citation type="journal article" date="2009" name="Plant Physiol.">
        <title>Large-scale Arabidopsis phosphoproteome profiling reveals novel chloroplast kinase substrates and phosphorylation networks.</title>
        <authorList>
            <person name="Reiland S."/>
            <person name="Messerli G."/>
            <person name="Baerenfaller K."/>
            <person name="Gerrits B."/>
            <person name="Endler A."/>
            <person name="Grossmann J."/>
            <person name="Gruissem W."/>
            <person name="Baginsky S."/>
        </authorList>
    </citation>
    <scope>PHOSPHORYLATION [LARGE SCALE ANALYSIS] AT SER-428</scope>
    <scope>IDENTIFICATION BY MASS SPECTROMETRY [LARGE SCALE ANALYSIS]</scope>
</reference>
<reference key="8">
    <citation type="journal article" date="2012" name="BMC Plant Biol.">
        <title>The upregulation of thiamine (vitamin B1) biosynthesis in Arabidopsis thaliana seedlings under salt and osmotic stress conditions is mediated by abscisic acid at the early stages of this stress response.</title>
        <authorList>
            <person name="Rapala-Kozik M."/>
            <person name="Wolak N."/>
            <person name="Kujda M."/>
            <person name="Banas A.K."/>
        </authorList>
    </citation>
    <scope>INDUCTION</scope>
    <scope>FUNCTION</scope>
</reference>
<reference key="9">
    <citation type="journal article" date="2012" name="Mol. Cell. Proteomics">
        <title>Comparative large-scale characterisation of plant vs. mammal proteins reveals similar and idiosyncratic N-alpha acetylation features.</title>
        <authorList>
            <person name="Bienvenut W.V."/>
            <person name="Sumpton D."/>
            <person name="Martinez A."/>
            <person name="Lilla S."/>
            <person name="Espagne C."/>
            <person name="Meinnel T."/>
            <person name="Giglione C."/>
        </authorList>
    </citation>
    <scope>ACETYLATION [LARGE SCALE ANALYSIS] AT ALA-67</scope>
    <scope>CLEAVAGE OF TRANSIT PEPTIDE [LARGE SCALE ANALYSIS] AFTER ALA-66</scope>
    <scope>IDENTIFICATION BY MASS SPECTROMETRY [LARGE SCALE ANALYSIS]</scope>
</reference>
<accession>Q8RWV0</accession>
<accession>B9DGH8</accession>
<accession>Q84WI5</accession>
<accession>Q8LE99</accession>
<accession>Q944P9</accession>
<accession>Q9LZY8</accession>